<feature type="chain" id="PRO_1000095308" description="Aspartyl/glutamyl-tRNA(Asn/Gln) amidotransferase subunit C">
    <location>
        <begin position="1"/>
        <end position="95"/>
    </location>
</feature>
<reference key="1">
    <citation type="submission" date="2008-02" db="EMBL/GenBank/DDBJ databases">
        <title>Complete sequence of Pseudomonas putida W619.</title>
        <authorList>
            <person name="Copeland A."/>
            <person name="Lucas S."/>
            <person name="Lapidus A."/>
            <person name="Barry K."/>
            <person name="Detter J.C."/>
            <person name="Glavina del Rio T."/>
            <person name="Dalin E."/>
            <person name="Tice H."/>
            <person name="Pitluck S."/>
            <person name="Chain P."/>
            <person name="Malfatti S."/>
            <person name="Shin M."/>
            <person name="Vergez L."/>
            <person name="Schmutz J."/>
            <person name="Larimer F."/>
            <person name="Land M."/>
            <person name="Hauser L."/>
            <person name="Kyrpides N."/>
            <person name="Kim E."/>
            <person name="Taghavi S."/>
            <person name="Vangronsveld D."/>
            <person name="van der Lelie D."/>
            <person name="Richardson P."/>
        </authorList>
    </citation>
    <scope>NUCLEOTIDE SEQUENCE [LARGE SCALE GENOMIC DNA]</scope>
    <source>
        <strain>W619</strain>
    </source>
</reference>
<sequence length="95" mass="10447">MALERCDVEKIAHLARLGLNEGELPRITDALNSILGLVDQMQAVDTTGIEPLAHPLEASQRLRPDQVTESNQRDAYQAIAPKTESGLYLVPKVIE</sequence>
<protein>
    <recommendedName>
        <fullName evidence="1">Aspartyl/glutamyl-tRNA(Asn/Gln) amidotransferase subunit C</fullName>
        <shortName evidence="1">Asp/Glu-ADT subunit C</shortName>
        <ecNumber evidence="1">6.3.5.-</ecNumber>
    </recommendedName>
</protein>
<dbReference type="EC" id="6.3.5.-" evidence="1"/>
<dbReference type="EMBL" id="CP000949">
    <property type="protein sequence ID" value="ACA74763.1"/>
    <property type="molecule type" value="Genomic_DNA"/>
</dbReference>
<dbReference type="SMR" id="B1JDP0"/>
<dbReference type="STRING" id="390235.PputW619_4283"/>
<dbReference type="KEGG" id="ppw:PputW619_4283"/>
<dbReference type="eggNOG" id="COG0721">
    <property type="taxonomic scope" value="Bacteria"/>
</dbReference>
<dbReference type="HOGENOM" id="CLU_105899_2_2_6"/>
<dbReference type="OrthoDB" id="9794326at2"/>
<dbReference type="GO" id="GO:0050566">
    <property type="term" value="F:asparaginyl-tRNA synthase (glutamine-hydrolyzing) activity"/>
    <property type="evidence" value="ECO:0007669"/>
    <property type="project" value="RHEA"/>
</dbReference>
<dbReference type="GO" id="GO:0005524">
    <property type="term" value="F:ATP binding"/>
    <property type="evidence" value="ECO:0007669"/>
    <property type="project" value="UniProtKB-KW"/>
</dbReference>
<dbReference type="GO" id="GO:0050567">
    <property type="term" value="F:glutaminyl-tRNA synthase (glutamine-hydrolyzing) activity"/>
    <property type="evidence" value="ECO:0007669"/>
    <property type="project" value="UniProtKB-UniRule"/>
</dbReference>
<dbReference type="GO" id="GO:0070681">
    <property type="term" value="P:glutaminyl-tRNAGln biosynthesis via transamidation"/>
    <property type="evidence" value="ECO:0007669"/>
    <property type="project" value="TreeGrafter"/>
</dbReference>
<dbReference type="GO" id="GO:0006450">
    <property type="term" value="P:regulation of translational fidelity"/>
    <property type="evidence" value="ECO:0007669"/>
    <property type="project" value="InterPro"/>
</dbReference>
<dbReference type="GO" id="GO:0006412">
    <property type="term" value="P:translation"/>
    <property type="evidence" value="ECO:0007669"/>
    <property type="project" value="UniProtKB-UniRule"/>
</dbReference>
<dbReference type="Gene3D" id="1.10.20.60">
    <property type="entry name" value="Glu-tRNAGln amidotransferase C subunit, N-terminal domain"/>
    <property type="match status" value="1"/>
</dbReference>
<dbReference type="HAMAP" id="MF_00122">
    <property type="entry name" value="GatC"/>
    <property type="match status" value="1"/>
</dbReference>
<dbReference type="InterPro" id="IPR036113">
    <property type="entry name" value="Asp/Glu-ADT_sf_sub_c"/>
</dbReference>
<dbReference type="InterPro" id="IPR003837">
    <property type="entry name" value="GatC"/>
</dbReference>
<dbReference type="NCBIfam" id="TIGR00135">
    <property type="entry name" value="gatC"/>
    <property type="match status" value="1"/>
</dbReference>
<dbReference type="PANTHER" id="PTHR15004">
    <property type="entry name" value="GLUTAMYL-TRNA(GLN) AMIDOTRANSFERASE SUBUNIT C, MITOCHONDRIAL"/>
    <property type="match status" value="1"/>
</dbReference>
<dbReference type="PANTHER" id="PTHR15004:SF0">
    <property type="entry name" value="GLUTAMYL-TRNA(GLN) AMIDOTRANSFERASE SUBUNIT C, MITOCHONDRIAL"/>
    <property type="match status" value="1"/>
</dbReference>
<dbReference type="Pfam" id="PF02686">
    <property type="entry name" value="GatC"/>
    <property type="match status" value="1"/>
</dbReference>
<dbReference type="SUPFAM" id="SSF141000">
    <property type="entry name" value="Glu-tRNAGln amidotransferase C subunit"/>
    <property type="match status" value="1"/>
</dbReference>
<keyword id="KW-0067">ATP-binding</keyword>
<keyword id="KW-0436">Ligase</keyword>
<keyword id="KW-0547">Nucleotide-binding</keyword>
<keyword id="KW-0648">Protein biosynthesis</keyword>
<evidence type="ECO:0000255" key="1">
    <source>
        <dbReference type="HAMAP-Rule" id="MF_00122"/>
    </source>
</evidence>
<accession>B1JDP0</accession>
<comment type="function">
    <text evidence="1">Allows the formation of correctly charged Asn-tRNA(Asn) or Gln-tRNA(Gln) through the transamidation of misacylated Asp-tRNA(Asn) or Glu-tRNA(Gln) in organisms which lack either or both of asparaginyl-tRNA or glutaminyl-tRNA synthetases. The reaction takes place in the presence of glutamine and ATP through an activated phospho-Asp-tRNA(Asn) or phospho-Glu-tRNA(Gln).</text>
</comment>
<comment type="catalytic activity">
    <reaction evidence="1">
        <text>L-glutamyl-tRNA(Gln) + L-glutamine + ATP + H2O = L-glutaminyl-tRNA(Gln) + L-glutamate + ADP + phosphate + H(+)</text>
        <dbReference type="Rhea" id="RHEA:17521"/>
        <dbReference type="Rhea" id="RHEA-COMP:9681"/>
        <dbReference type="Rhea" id="RHEA-COMP:9684"/>
        <dbReference type="ChEBI" id="CHEBI:15377"/>
        <dbReference type="ChEBI" id="CHEBI:15378"/>
        <dbReference type="ChEBI" id="CHEBI:29985"/>
        <dbReference type="ChEBI" id="CHEBI:30616"/>
        <dbReference type="ChEBI" id="CHEBI:43474"/>
        <dbReference type="ChEBI" id="CHEBI:58359"/>
        <dbReference type="ChEBI" id="CHEBI:78520"/>
        <dbReference type="ChEBI" id="CHEBI:78521"/>
        <dbReference type="ChEBI" id="CHEBI:456216"/>
    </reaction>
</comment>
<comment type="catalytic activity">
    <reaction evidence="1">
        <text>L-aspartyl-tRNA(Asn) + L-glutamine + ATP + H2O = L-asparaginyl-tRNA(Asn) + L-glutamate + ADP + phosphate + 2 H(+)</text>
        <dbReference type="Rhea" id="RHEA:14513"/>
        <dbReference type="Rhea" id="RHEA-COMP:9674"/>
        <dbReference type="Rhea" id="RHEA-COMP:9677"/>
        <dbReference type="ChEBI" id="CHEBI:15377"/>
        <dbReference type="ChEBI" id="CHEBI:15378"/>
        <dbReference type="ChEBI" id="CHEBI:29985"/>
        <dbReference type="ChEBI" id="CHEBI:30616"/>
        <dbReference type="ChEBI" id="CHEBI:43474"/>
        <dbReference type="ChEBI" id="CHEBI:58359"/>
        <dbReference type="ChEBI" id="CHEBI:78515"/>
        <dbReference type="ChEBI" id="CHEBI:78516"/>
        <dbReference type="ChEBI" id="CHEBI:456216"/>
    </reaction>
</comment>
<comment type="subunit">
    <text evidence="1">Heterotrimer of A, B and C subunits.</text>
</comment>
<comment type="similarity">
    <text evidence="1">Belongs to the GatC family.</text>
</comment>
<gene>
    <name evidence="1" type="primary">gatC</name>
    <name type="ordered locus">PputW619_4283</name>
</gene>
<name>GATC_PSEPW</name>
<proteinExistence type="inferred from homology"/>
<organism>
    <name type="scientific">Pseudomonas putida (strain W619)</name>
    <dbReference type="NCBI Taxonomy" id="390235"/>
    <lineage>
        <taxon>Bacteria</taxon>
        <taxon>Pseudomonadati</taxon>
        <taxon>Pseudomonadota</taxon>
        <taxon>Gammaproteobacteria</taxon>
        <taxon>Pseudomonadales</taxon>
        <taxon>Pseudomonadaceae</taxon>
        <taxon>Pseudomonas</taxon>
    </lineage>
</organism>